<protein>
    <recommendedName>
        <fullName>Baseplate puncturing device gp45</fullName>
    </recommendedName>
    <alternativeName>
        <fullName>Baseplate spike protein</fullName>
    </alternativeName>
    <alternativeName>
        <fullName>Gene product 45</fullName>
        <shortName>gp45</shortName>
    </alternativeName>
    <alternativeName>
        <fullName>Gene product Q</fullName>
        <shortName>gpQ</shortName>
    </alternativeName>
</protein>
<reference key="1">
    <citation type="journal article" date="2002" name="J. Mol. Biol.">
        <title>Bacteriophage Mu genome sequence: analysis and comparison with Mu-like prophages in Haemophilus, Neisseria and Deinococcus.</title>
        <authorList>
            <person name="Morgan G.J."/>
            <person name="Hatfull G.F."/>
            <person name="Casjens S."/>
            <person name="Hendrix R.W."/>
        </authorList>
    </citation>
    <scope>NUCLEOTIDE SEQUENCE [LARGE SCALE GENOMIC DNA]</scope>
</reference>
<reference key="2">
    <citation type="journal article" date="1985" name="Virology">
        <title>Morphogenetic structures present in lysates of amber mutants of bacteriophage Mu.</title>
        <authorList>
            <person name="Grundy F.J."/>
            <person name="Howe M.M."/>
        </authorList>
    </citation>
    <scope>DISRUPTION PHENOTYPE</scope>
</reference>
<reference key="3">
    <citation type="journal article" date="1993" name="Genetics">
        <title>Mutational analysis of a C-dependent late promoter of bacteriophage Mu.</title>
        <authorList>
            <person name="Chiang L.W."/>
            <person name="Howe M.M."/>
        </authorList>
    </citation>
    <scope>INDUCTION</scope>
</reference>
<reference key="4">
    <citation type="journal article" date="2010" name="Biochim. Biophys. Acta">
        <title>The C-terminal domain is sufficient for host-binding activity of the Mu phage tail-spike protein.</title>
        <authorList>
            <person name="Suzuki H."/>
            <person name="Yamada S."/>
            <person name="Toyama Y."/>
            <person name="Takeda S."/>
        </authorList>
    </citation>
    <scope>FUNCTION</scope>
    <scope>SUBUNIT</scope>
</reference>
<reference key="5">
    <citation type="journal article" date="2012" name="Adv. Exp. Med. Biol.">
        <title>Contractile tail machines of bacteriophages.</title>
        <authorList>
            <person name="Leiman P.G."/>
            <person name="Shneider M.M."/>
        </authorList>
    </citation>
    <scope>REVIEW</scope>
</reference>
<reference key="6">
    <citation type="journal article" date="2016" name="Proc. Natl. Acad. Sci. U.S.A.">
        <title>Baseplate assembly of phage Mu: Defining the conserved core components of contractile-tailed phages and related bacterial systems.</title>
        <authorList>
            <person name="Buettner C.R."/>
            <person name="Wu Y."/>
            <person name="Maxwell K.L."/>
            <person name="Davidson A.R."/>
        </authorList>
    </citation>
    <scope>SUBUNIT</scope>
    <scope>SUBCELLULAR LOCATION</scope>
</reference>
<reference key="7">
    <citation type="journal article" date="2013" name="Biochim. Biophys. Acta">
        <title>Crystal structure of the C-terminal domain of Mu phage central spike and functions of bound calcium ion.</title>
        <authorList>
            <person name="Harada K."/>
            <person name="Yamashita E."/>
            <person name="Nakagawa A."/>
            <person name="Miyafusa T."/>
            <person name="Tsumoto K."/>
            <person name="Ueno T."/>
            <person name="Toyama Y."/>
            <person name="Takeda S."/>
        </authorList>
    </citation>
    <scope>X-RAY CRYSTALLOGRAPHY (1.44 ANGSTROMS) OF 92-197</scope>
    <scope>FUNCTION</scope>
    <scope>SUBUNIT</scope>
    <scope>DOMAIN</scope>
    <scope>COFACTOR</scope>
    <scope>MUTAGENESIS OF ASP-188</scope>
</reference>
<proteinExistence type="evidence at protein level"/>
<gene>
    <name type="ordered locus">Mup45</name>
</gene>
<feature type="chain" id="PRO_0000077838" description="Baseplate puncturing device gp45">
    <location>
        <begin position="1"/>
        <end position="197"/>
    </location>
</feature>
<feature type="region of interest" description="Disordered" evidence="1">
    <location>
        <begin position="172"/>
        <end position="197"/>
    </location>
</feature>
<feature type="compositionally biased region" description="Basic and acidic residues" evidence="1">
    <location>
        <begin position="179"/>
        <end position="188"/>
    </location>
</feature>
<feature type="binding site">
    <location>
        <position position="183"/>
    </location>
    <ligand>
        <name>Fe cation</name>
        <dbReference type="ChEBI" id="CHEBI:24875"/>
        <note>ligand shared between trimeric partners</note>
    </ligand>
</feature>
<feature type="binding site">
    <location>
        <position position="185"/>
    </location>
    <ligand>
        <name>Fe cation</name>
        <dbReference type="ChEBI" id="CHEBI:24875"/>
        <note>ligand shared between trimeric partners</note>
    </ligand>
</feature>
<feature type="binding site">
    <location>
        <position position="188"/>
    </location>
    <ligand>
        <name>Ca(2+)</name>
        <dbReference type="ChEBI" id="CHEBI:29108"/>
        <note>ligand shared between trimeric partners</note>
    </ligand>
</feature>
<feature type="binding site">
    <location>
        <position position="188"/>
    </location>
    <ligand>
        <name>chloride</name>
        <dbReference type="ChEBI" id="CHEBI:17996"/>
        <note>ligand shared between trimeric partners</note>
    </ligand>
</feature>
<feature type="binding site">
    <location>
        <position position="189"/>
    </location>
    <ligand>
        <name>Ca(2+)</name>
        <dbReference type="ChEBI" id="CHEBI:29108"/>
        <note>ligand shared between trimeric partners</note>
    </ligand>
</feature>
<feature type="mutagenesis site" description="Loss of membrane-binding ability." evidence="3">
    <original>D</original>
    <variation>A</variation>
    <location>
        <position position="188"/>
    </location>
</feature>
<feature type="strand" evidence="8">
    <location>
        <begin position="104"/>
        <end position="107"/>
    </location>
</feature>
<feature type="strand" evidence="8">
    <location>
        <begin position="113"/>
        <end position="117"/>
    </location>
</feature>
<feature type="turn" evidence="8">
    <location>
        <begin position="118"/>
        <end position="120"/>
    </location>
</feature>
<feature type="strand" evidence="8">
    <location>
        <begin position="121"/>
        <end position="140"/>
    </location>
</feature>
<feature type="strand" evidence="8">
    <location>
        <begin position="142"/>
        <end position="154"/>
    </location>
</feature>
<feature type="strand" evidence="8">
    <location>
        <begin position="156"/>
        <end position="160"/>
    </location>
</feature>
<feature type="strand" evidence="8">
    <location>
        <begin position="162"/>
        <end position="166"/>
    </location>
</feature>
<feature type="strand" evidence="8">
    <location>
        <begin position="168"/>
        <end position="171"/>
    </location>
</feature>
<feature type="strand" evidence="8">
    <location>
        <begin position="173"/>
        <end position="175"/>
    </location>
</feature>
<feature type="turn" evidence="8">
    <location>
        <begin position="180"/>
        <end position="182"/>
    </location>
</feature>
<feature type="strand" evidence="8">
    <location>
        <begin position="190"/>
        <end position="192"/>
    </location>
</feature>
<name>BP45_BPMU</name>
<comment type="function">
    <text evidence="2 3">Component of the baseplate that forms a central needlelike spike used to puncture the host cell membrane for tube insertion during virus entry. Probably involved in baseplate and tail assembly. Serves as the distal plug of tail tube channel and might regulate the process of the phage DNA and protein ejection into the host cell.</text>
</comment>
<comment type="cofactor">
    <cofactor evidence="3">
        <name>Ca(2+)</name>
        <dbReference type="ChEBI" id="CHEBI:29108"/>
    </cofactor>
    <text evidence="3">Binds 1 Ca(2+) cation per trimer. Ca(2+) plays an important role in interaction with the host cell membrane.</text>
</comment>
<comment type="cofactor">
    <cofactor evidence="3">
        <name>chloride</name>
        <dbReference type="ChEBI" id="CHEBI:17996"/>
    </cofactor>
    <text evidence="3">Binds 1 Cl(-) ion per trimer.</text>
</comment>
<comment type="cofactor">
    <cofactor evidence="3">
        <name>Fe cation</name>
        <dbReference type="ChEBI" id="CHEBI:24875"/>
    </cofactor>
    <text evidence="3">Binds 1 Fe cation per trimer.</text>
</comment>
<comment type="subunit">
    <text evidence="2 3 4">Homotrimer (PubMed:20478417, PubMed:22922659). Part of a complex composed of three DNA circularization protein N, three baseplate hub protein gp44 and three sub-complex wedge (made of two copies of each baseplate protein gp46, gp47 and gp48) that forms the baseplate (PubMed:27555589).</text>
</comment>
<comment type="subcellular location">
    <subcellularLocation>
        <location evidence="4">Virion</location>
    </subcellularLocation>
    <subcellularLocation>
        <location evidence="7">Host cytoplasm</location>
    </subcellularLocation>
    <text evidence="4">Baseplate protein.</text>
</comment>
<comment type="induction">
    <text evidence="6">Expressed in the late phase of the viral replicative cycle. Expression of late genes is activated by the viral late transcription activator C.</text>
</comment>
<comment type="domain">
    <text evidence="3">The C-terminus is a needlelike shaped homotrimer consisting of an intertwined beta-sheet, a triple beta-helix and a metal-binding region.</text>
</comment>
<comment type="disruption phenotype">
    <text evidence="5">No tail is synthesized.</text>
</comment>
<comment type="caution">
    <text evidence="7">Translation initiates from a non-canonical start codon (GUG).</text>
</comment>
<dbReference type="EMBL" id="AF083977">
    <property type="protein sequence ID" value="AAF01123.1"/>
    <property type="molecule type" value="Genomic_DNA"/>
</dbReference>
<dbReference type="RefSeq" id="NP_050649.1">
    <property type="nucleotide sequence ID" value="NC_000929.1"/>
</dbReference>
<dbReference type="PDB" id="3VTN">
    <property type="method" value="X-ray"/>
    <property type="resolution" value="1.75 A"/>
    <property type="chains" value="A=100-197"/>
</dbReference>
<dbReference type="PDB" id="3VTO">
    <property type="method" value="X-ray"/>
    <property type="resolution" value="1.44 A"/>
    <property type="chains" value="A/B/C/P/Q/R=92-197"/>
</dbReference>
<dbReference type="PDB" id="9KI1">
    <property type="method" value="EM"/>
    <property type="resolution" value="3.30 A"/>
    <property type="chains" value="V/W/X=1-197"/>
</dbReference>
<dbReference type="PDBsum" id="3VTN"/>
<dbReference type="PDBsum" id="3VTO"/>
<dbReference type="PDBsum" id="9KI1"/>
<dbReference type="EMDB" id="EMD-62362"/>
<dbReference type="SMR" id="Q9T1V4"/>
<dbReference type="GeneID" id="2636280"/>
<dbReference type="KEGG" id="vg:2636280"/>
<dbReference type="EvolutionaryTrace" id="Q9T1V4"/>
<dbReference type="Proteomes" id="UP000002611">
    <property type="component" value="Genome"/>
</dbReference>
<dbReference type="GO" id="GO:0030430">
    <property type="term" value="C:host cell cytoplasm"/>
    <property type="evidence" value="ECO:0007669"/>
    <property type="project" value="UniProtKB-SubCell"/>
</dbReference>
<dbReference type="GO" id="GO:0098025">
    <property type="term" value="C:virus tail, baseplate"/>
    <property type="evidence" value="ECO:0007669"/>
    <property type="project" value="UniProtKB-KW"/>
</dbReference>
<dbReference type="GO" id="GO:0046872">
    <property type="term" value="F:metal ion binding"/>
    <property type="evidence" value="ECO:0007669"/>
    <property type="project" value="UniProtKB-KW"/>
</dbReference>
<dbReference type="GO" id="GO:0099000">
    <property type="term" value="P:symbiont genome ejection through host cell envelope, contractile tail mechanism"/>
    <property type="evidence" value="ECO:0007669"/>
    <property type="project" value="UniProtKB-KW"/>
</dbReference>
<dbReference type="GO" id="GO:0098003">
    <property type="term" value="P:viral tail assembly"/>
    <property type="evidence" value="ECO:0007669"/>
    <property type="project" value="UniProtKB-KW"/>
</dbReference>
<dbReference type="Gene3D" id="2.20.25.540">
    <property type="match status" value="1"/>
</dbReference>
<dbReference type="Gene3D" id="6.20.170.10">
    <property type="match status" value="1"/>
</dbReference>
<dbReference type="InterPro" id="IPR013046">
    <property type="entry name" value="GpV/Gp45"/>
</dbReference>
<dbReference type="InterPro" id="IPR014462">
    <property type="entry name" value="Phage_Mu_Gp45"/>
</dbReference>
<dbReference type="InterPro" id="IPR053861">
    <property type="entry name" value="Phage_Mu_Gp45_N"/>
</dbReference>
<dbReference type="NCBIfam" id="TIGR01644">
    <property type="entry name" value="phage_P2_V"/>
    <property type="match status" value="1"/>
</dbReference>
<dbReference type="Pfam" id="PF06890">
    <property type="entry name" value="Phage_Mu_Gp45"/>
    <property type="match status" value="1"/>
</dbReference>
<dbReference type="PIRSF" id="PIRSF012337">
    <property type="entry name" value="gp45"/>
    <property type="match status" value="1"/>
</dbReference>
<organism>
    <name type="scientific">Escherichia phage Mu</name>
    <name type="common">Bacteriophage Mu</name>
    <dbReference type="NCBI Taxonomy" id="2681603"/>
    <lineage>
        <taxon>Viruses</taxon>
        <taxon>Duplodnaviria</taxon>
        <taxon>Heunggongvirae</taxon>
        <taxon>Uroviricota</taxon>
        <taxon>Caudoviricetes</taxon>
        <taxon>Muvirus</taxon>
        <taxon>Muvirus mu</taxon>
    </lineage>
</organism>
<accession>Q9T1V4</accession>
<organismHost>
    <name type="scientific">Enterobacteriaceae</name>
    <dbReference type="NCBI Taxonomy" id="543"/>
</organismHost>
<sequence>MERVNDSALNRLLTPLMRRVRLMLARAVVNVINDGRKVQNLQVGLLDDEESDEVERLQNYGHFSVPLPGAEALIACVGAQRDQGIAVVVEDRRYRPTNLEPGDAGIYHHEGHRIRLTKDGRCIITCKTVEVYADESMTVDTPRTTFTGDVEIQKGLGVKGKSQFDSNITAPDAIINGKSTDKHIHRGDSGGTTGPMQ</sequence>
<keyword id="KW-0002">3D-structure</keyword>
<keyword id="KW-0106">Calcium</keyword>
<keyword id="KW-0868">Chloride</keyword>
<keyword id="KW-1035">Host cytoplasm</keyword>
<keyword id="KW-0408">Iron</keyword>
<keyword id="KW-0426">Late protein</keyword>
<keyword id="KW-0479">Metal-binding</keyword>
<keyword id="KW-1185">Reference proteome</keyword>
<keyword id="KW-1226">Viral baseplate protein</keyword>
<keyword id="KW-1242">Viral contractile tail ejection system</keyword>
<keyword id="KW-1171">Viral genome ejection through host cell envelope</keyword>
<keyword id="KW-1162">Viral penetration into host cytoplasm</keyword>
<keyword id="KW-1188">Viral release from host cell</keyword>
<keyword id="KW-1245">Viral tail assembly</keyword>
<keyword id="KW-1227">Viral tail protein</keyword>
<keyword id="KW-0946">Virion</keyword>
<keyword id="KW-1160">Virus entry into host cell</keyword>
<evidence type="ECO:0000256" key="1">
    <source>
        <dbReference type="SAM" id="MobiDB-lite"/>
    </source>
</evidence>
<evidence type="ECO:0000269" key="2">
    <source>
    </source>
</evidence>
<evidence type="ECO:0000269" key="3">
    <source>
    </source>
</evidence>
<evidence type="ECO:0000269" key="4">
    <source>
    </source>
</evidence>
<evidence type="ECO:0000269" key="5">
    <source>
    </source>
</evidence>
<evidence type="ECO:0000269" key="6">
    <source>
    </source>
</evidence>
<evidence type="ECO:0000305" key="7"/>
<evidence type="ECO:0007829" key="8">
    <source>
        <dbReference type="PDB" id="3VTO"/>
    </source>
</evidence>